<organism>
    <name type="scientific">Limosilactobacillus fermentum (strain NBRC 3956 / LMG 18251)</name>
    <name type="common">Lactobacillus fermentum</name>
    <dbReference type="NCBI Taxonomy" id="334390"/>
    <lineage>
        <taxon>Bacteria</taxon>
        <taxon>Bacillati</taxon>
        <taxon>Bacillota</taxon>
        <taxon>Bacilli</taxon>
        <taxon>Lactobacillales</taxon>
        <taxon>Lactobacillaceae</taxon>
        <taxon>Limosilactobacillus</taxon>
    </lineage>
</organism>
<reference key="1">
    <citation type="journal article" date="2008" name="DNA Res.">
        <title>Comparative genome analysis of Lactobacillus reuteri and Lactobacillus fermentum reveal a genomic island for reuterin and cobalamin production.</title>
        <authorList>
            <person name="Morita H."/>
            <person name="Toh H."/>
            <person name="Fukuda S."/>
            <person name="Horikawa H."/>
            <person name="Oshima K."/>
            <person name="Suzuki T."/>
            <person name="Murakami M."/>
            <person name="Hisamatsu S."/>
            <person name="Kato Y."/>
            <person name="Takizawa T."/>
            <person name="Fukuoka H."/>
            <person name="Yoshimura T."/>
            <person name="Itoh K."/>
            <person name="O'Sullivan D.J."/>
            <person name="McKay L.L."/>
            <person name="Ohno H."/>
            <person name="Kikuchi J."/>
            <person name="Masaoka T."/>
            <person name="Hattori M."/>
        </authorList>
    </citation>
    <scope>NUCLEOTIDE SEQUENCE [LARGE SCALE GENOMIC DNA]</scope>
    <source>
        <strain>NBRC 3956 / LMG 18251</strain>
    </source>
</reference>
<gene>
    <name evidence="1" type="primary">plsX</name>
    <name type="ordered locus">LAF_1240</name>
</gene>
<protein>
    <recommendedName>
        <fullName evidence="1">Phosphate acyltransferase</fullName>
        <ecNumber evidence="1">2.3.1.274</ecNumber>
    </recommendedName>
    <alternativeName>
        <fullName evidence="1">Acyl-ACP phosphotransacylase</fullName>
    </alternativeName>
    <alternativeName>
        <fullName evidence="1">Acyl-[acyl-carrier-protein]--phosphate acyltransferase</fullName>
    </alternativeName>
    <alternativeName>
        <fullName evidence="1">Phosphate-acyl-ACP acyltransferase</fullName>
    </alternativeName>
</protein>
<keyword id="KW-0963">Cytoplasm</keyword>
<keyword id="KW-0444">Lipid biosynthesis</keyword>
<keyword id="KW-0443">Lipid metabolism</keyword>
<keyword id="KW-0594">Phospholipid biosynthesis</keyword>
<keyword id="KW-1208">Phospholipid metabolism</keyword>
<keyword id="KW-1185">Reference proteome</keyword>
<keyword id="KW-0808">Transferase</keyword>
<proteinExistence type="inferred from homology"/>
<evidence type="ECO:0000255" key="1">
    <source>
        <dbReference type="HAMAP-Rule" id="MF_00019"/>
    </source>
</evidence>
<feature type="chain" id="PRO_1000089918" description="Phosphate acyltransferase">
    <location>
        <begin position="1"/>
        <end position="345"/>
    </location>
</feature>
<dbReference type="EC" id="2.3.1.274" evidence="1"/>
<dbReference type="EMBL" id="AP008937">
    <property type="protein sequence ID" value="BAG27576.1"/>
    <property type="molecule type" value="Genomic_DNA"/>
</dbReference>
<dbReference type="RefSeq" id="WP_012391443.1">
    <property type="nucleotide sequence ID" value="NC_010610.1"/>
</dbReference>
<dbReference type="SMR" id="B2GD44"/>
<dbReference type="GeneID" id="83714312"/>
<dbReference type="KEGG" id="lfe:LAF_1240"/>
<dbReference type="eggNOG" id="COG0416">
    <property type="taxonomic scope" value="Bacteria"/>
</dbReference>
<dbReference type="HOGENOM" id="CLU_039379_1_1_9"/>
<dbReference type="UniPathway" id="UPA00085"/>
<dbReference type="Proteomes" id="UP000001697">
    <property type="component" value="Chromosome"/>
</dbReference>
<dbReference type="GO" id="GO:0005737">
    <property type="term" value="C:cytoplasm"/>
    <property type="evidence" value="ECO:0007669"/>
    <property type="project" value="UniProtKB-SubCell"/>
</dbReference>
<dbReference type="GO" id="GO:0043811">
    <property type="term" value="F:phosphate:acyl-[acyl carrier protein] acyltransferase activity"/>
    <property type="evidence" value="ECO:0007669"/>
    <property type="project" value="UniProtKB-UniRule"/>
</dbReference>
<dbReference type="GO" id="GO:0006633">
    <property type="term" value="P:fatty acid biosynthetic process"/>
    <property type="evidence" value="ECO:0007669"/>
    <property type="project" value="UniProtKB-UniRule"/>
</dbReference>
<dbReference type="GO" id="GO:0008654">
    <property type="term" value="P:phospholipid biosynthetic process"/>
    <property type="evidence" value="ECO:0007669"/>
    <property type="project" value="UniProtKB-KW"/>
</dbReference>
<dbReference type="Gene3D" id="3.40.718.10">
    <property type="entry name" value="Isopropylmalate Dehydrogenase"/>
    <property type="match status" value="1"/>
</dbReference>
<dbReference type="HAMAP" id="MF_00019">
    <property type="entry name" value="PlsX"/>
    <property type="match status" value="1"/>
</dbReference>
<dbReference type="InterPro" id="IPR003664">
    <property type="entry name" value="FA_synthesis"/>
</dbReference>
<dbReference type="InterPro" id="IPR012281">
    <property type="entry name" value="Phospholipid_synth_PlsX-like"/>
</dbReference>
<dbReference type="NCBIfam" id="TIGR00182">
    <property type="entry name" value="plsX"/>
    <property type="match status" value="1"/>
</dbReference>
<dbReference type="PANTHER" id="PTHR30100">
    <property type="entry name" value="FATTY ACID/PHOSPHOLIPID SYNTHESIS PROTEIN PLSX"/>
    <property type="match status" value="1"/>
</dbReference>
<dbReference type="PANTHER" id="PTHR30100:SF1">
    <property type="entry name" value="PHOSPHATE ACYLTRANSFERASE"/>
    <property type="match status" value="1"/>
</dbReference>
<dbReference type="Pfam" id="PF02504">
    <property type="entry name" value="FA_synthesis"/>
    <property type="match status" value="1"/>
</dbReference>
<dbReference type="PIRSF" id="PIRSF002465">
    <property type="entry name" value="Phsphlp_syn_PlsX"/>
    <property type="match status" value="1"/>
</dbReference>
<dbReference type="SUPFAM" id="SSF53659">
    <property type="entry name" value="Isocitrate/Isopropylmalate dehydrogenase-like"/>
    <property type="match status" value="1"/>
</dbReference>
<name>PLSX_LIMF3</name>
<sequence length="345" mass="36929">MKIAVDAMGGDNAPAVVVEGVERARDRFKDIEFDLFGDPQQVRPLIKDATRINLIETTEMIEMGEEPVRAIRKKKDSSIVRAAVAVKEGQADAFFSAGNTGAILAAGLFIVGRIKGIDRPGLTSILPIAKPGSGAKNFVYLDSGANAESKEKNLLQFAQLGRFYAENVLGVNNPRIALLNNGTEEDKGDRLHKEVHQQLKAQGDLNFVGNVEASALLAGEADVIVSDGWTANAALKATEGTAKMMLTLIKNGIENGGLRAKLGYLFLKPVFKKIAKLMGTSTYGGAVLLGLKAPVVKTHGSADALAVENTIAQIHTMIESKVIEKTVSYFGQVQSEENIDKPSKN</sequence>
<accession>B2GD44</accession>
<comment type="function">
    <text evidence="1">Catalyzes the reversible formation of acyl-phosphate (acyl-PO(4)) from acyl-[acyl-carrier-protein] (acyl-ACP). This enzyme utilizes acyl-ACP as fatty acyl donor, but not acyl-CoA.</text>
</comment>
<comment type="catalytic activity">
    <reaction evidence="1">
        <text>a fatty acyl-[ACP] + phosphate = an acyl phosphate + holo-[ACP]</text>
        <dbReference type="Rhea" id="RHEA:42292"/>
        <dbReference type="Rhea" id="RHEA-COMP:9685"/>
        <dbReference type="Rhea" id="RHEA-COMP:14125"/>
        <dbReference type="ChEBI" id="CHEBI:43474"/>
        <dbReference type="ChEBI" id="CHEBI:59918"/>
        <dbReference type="ChEBI" id="CHEBI:64479"/>
        <dbReference type="ChEBI" id="CHEBI:138651"/>
        <dbReference type="EC" id="2.3.1.274"/>
    </reaction>
</comment>
<comment type="pathway">
    <text evidence="1">Lipid metabolism; phospholipid metabolism.</text>
</comment>
<comment type="subunit">
    <text evidence="1">Homodimer. Probably interacts with PlsY.</text>
</comment>
<comment type="subcellular location">
    <subcellularLocation>
        <location evidence="1">Cytoplasm</location>
    </subcellularLocation>
    <text evidence="1">Associated with the membrane possibly through PlsY.</text>
</comment>
<comment type="similarity">
    <text evidence="1">Belongs to the PlsX family.</text>
</comment>